<gene>
    <name evidence="2" type="primary">mutM</name>
    <name evidence="2" type="synonym">fpg</name>
    <name type="ordered locus">Bpet4006</name>
</gene>
<evidence type="ECO:0000250" key="1"/>
<evidence type="ECO:0000255" key="2">
    <source>
        <dbReference type="HAMAP-Rule" id="MF_00103"/>
    </source>
</evidence>
<dbReference type="EC" id="3.2.2.23" evidence="2"/>
<dbReference type="EC" id="4.2.99.18" evidence="2"/>
<dbReference type="EMBL" id="AM902716">
    <property type="protein sequence ID" value="CAP44354.1"/>
    <property type="molecule type" value="Genomic_DNA"/>
</dbReference>
<dbReference type="SMR" id="A9I6Y3"/>
<dbReference type="STRING" id="94624.Bpet4006"/>
<dbReference type="KEGG" id="bpt:Bpet4006"/>
<dbReference type="eggNOG" id="COG0266">
    <property type="taxonomic scope" value="Bacteria"/>
</dbReference>
<dbReference type="Proteomes" id="UP000001225">
    <property type="component" value="Chromosome"/>
</dbReference>
<dbReference type="GO" id="GO:0034039">
    <property type="term" value="F:8-oxo-7,8-dihydroguanine DNA N-glycosylase activity"/>
    <property type="evidence" value="ECO:0007669"/>
    <property type="project" value="TreeGrafter"/>
</dbReference>
<dbReference type="GO" id="GO:0140078">
    <property type="term" value="F:class I DNA-(apurinic or apyrimidinic site) endonuclease activity"/>
    <property type="evidence" value="ECO:0007669"/>
    <property type="project" value="UniProtKB-EC"/>
</dbReference>
<dbReference type="GO" id="GO:0003684">
    <property type="term" value="F:damaged DNA binding"/>
    <property type="evidence" value="ECO:0007669"/>
    <property type="project" value="InterPro"/>
</dbReference>
<dbReference type="GO" id="GO:0008270">
    <property type="term" value="F:zinc ion binding"/>
    <property type="evidence" value="ECO:0007669"/>
    <property type="project" value="UniProtKB-UniRule"/>
</dbReference>
<dbReference type="GO" id="GO:0006284">
    <property type="term" value="P:base-excision repair"/>
    <property type="evidence" value="ECO:0007669"/>
    <property type="project" value="InterPro"/>
</dbReference>
<dbReference type="CDD" id="cd08966">
    <property type="entry name" value="EcFpg-like_N"/>
    <property type="match status" value="1"/>
</dbReference>
<dbReference type="FunFam" id="1.10.8.50:FF:000003">
    <property type="entry name" value="Formamidopyrimidine-DNA glycosylase"/>
    <property type="match status" value="1"/>
</dbReference>
<dbReference type="Gene3D" id="1.10.8.50">
    <property type="match status" value="1"/>
</dbReference>
<dbReference type="Gene3D" id="3.20.190.10">
    <property type="entry name" value="MutM-like, N-terminal"/>
    <property type="match status" value="1"/>
</dbReference>
<dbReference type="HAMAP" id="MF_00103">
    <property type="entry name" value="Fapy_DNA_glycosyl"/>
    <property type="match status" value="1"/>
</dbReference>
<dbReference type="InterPro" id="IPR015886">
    <property type="entry name" value="DNA_glyclase/AP_lyase_DNA-bd"/>
</dbReference>
<dbReference type="InterPro" id="IPR015887">
    <property type="entry name" value="DNA_glyclase_Znf_dom_DNA_BS"/>
</dbReference>
<dbReference type="InterPro" id="IPR020629">
    <property type="entry name" value="Formamido-pyr_DNA_Glyclase"/>
</dbReference>
<dbReference type="InterPro" id="IPR012319">
    <property type="entry name" value="FPG_cat"/>
</dbReference>
<dbReference type="InterPro" id="IPR035937">
    <property type="entry name" value="MutM-like_N-ter"/>
</dbReference>
<dbReference type="InterPro" id="IPR010979">
    <property type="entry name" value="Ribosomal_uS13-like_H2TH"/>
</dbReference>
<dbReference type="InterPro" id="IPR000214">
    <property type="entry name" value="Znf_DNA_glyclase/AP_lyase"/>
</dbReference>
<dbReference type="InterPro" id="IPR010663">
    <property type="entry name" value="Znf_FPG/IleRS"/>
</dbReference>
<dbReference type="NCBIfam" id="TIGR00577">
    <property type="entry name" value="fpg"/>
    <property type="match status" value="1"/>
</dbReference>
<dbReference type="NCBIfam" id="NF002211">
    <property type="entry name" value="PRK01103.1"/>
    <property type="match status" value="1"/>
</dbReference>
<dbReference type="PANTHER" id="PTHR22993">
    <property type="entry name" value="FORMAMIDOPYRIMIDINE-DNA GLYCOSYLASE"/>
    <property type="match status" value="1"/>
</dbReference>
<dbReference type="PANTHER" id="PTHR22993:SF9">
    <property type="entry name" value="FORMAMIDOPYRIMIDINE-DNA GLYCOSYLASE"/>
    <property type="match status" value="1"/>
</dbReference>
<dbReference type="Pfam" id="PF01149">
    <property type="entry name" value="Fapy_DNA_glyco"/>
    <property type="match status" value="1"/>
</dbReference>
<dbReference type="Pfam" id="PF06831">
    <property type="entry name" value="H2TH"/>
    <property type="match status" value="1"/>
</dbReference>
<dbReference type="Pfam" id="PF06827">
    <property type="entry name" value="zf-FPG_IleRS"/>
    <property type="match status" value="1"/>
</dbReference>
<dbReference type="SMART" id="SM00898">
    <property type="entry name" value="Fapy_DNA_glyco"/>
    <property type="match status" value="1"/>
</dbReference>
<dbReference type="SMART" id="SM01232">
    <property type="entry name" value="H2TH"/>
    <property type="match status" value="1"/>
</dbReference>
<dbReference type="SUPFAM" id="SSF57716">
    <property type="entry name" value="Glucocorticoid receptor-like (DNA-binding domain)"/>
    <property type="match status" value="1"/>
</dbReference>
<dbReference type="SUPFAM" id="SSF81624">
    <property type="entry name" value="N-terminal domain of MutM-like DNA repair proteins"/>
    <property type="match status" value="1"/>
</dbReference>
<dbReference type="SUPFAM" id="SSF46946">
    <property type="entry name" value="S13-like H2TH domain"/>
    <property type="match status" value="1"/>
</dbReference>
<dbReference type="PROSITE" id="PS51068">
    <property type="entry name" value="FPG_CAT"/>
    <property type="match status" value="1"/>
</dbReference>
<dbReference type="PROSITE" id="PS01242">
    <property type="entry name" value="ZF_FPG_1"/>
    <property type="match status" value="1"/>
</dbReference>
<dbReference type="PROSITE" id="PS51066">
    <property type="entry name" value="ZF_FPG_2"/>
    <property type="match status" value="1"/>
</dbReference>
<organism>
    <name type="scientific">Bordetella petrii (strain ATCC BAA-461 / DSM 12804 / CCUG 43448)</name>
    <dbReference type="NCBI Taxonomy" id="340100"/>
    <lineage>
        <taxon>Bacteria</taxon>
        <taxon>Pseudomonadati</taxon>
        <taxon>Pseudomonadota</taxon>
        <taxon>Betaproteobacteria</taxon>
        <taxon>Burkholderiales</taxon>
        <taxon>Alcaligenaceae</taxon>
        <taxon>Bordetella</taxon>
    </lineage>
</organism>
<name>FPG_BORPD</name>
<proteinExistence type="inferred from homology"/>
<sequence>MPELPEVETTRRGIDAVITGKTLRRLLVRESRMRWPIPADLPGLLSGRAVLECARRGKYLLLRFEHGTQIVHLGMSGSLRSVPAGEAPRKHDHVDWIFDHATLRLHDPRRFGAVLWHPDTAGPIAAHPLLARLGIEPFDPRFDGAWLHSQFRNRAIAVKQALLAGDAVVGVGNIYASESLFRAGIDPRTPARRISRARCARLADMVRATLADALASGGSTLRDYVGASGQPGSYFEIHAAVYERAGLPCRVCGTPIRRLVQGQRATYYCPSCQKR</sequence>
<accession>A9I6Y3</accession>
<keyword id="KW-0227">DNA damage</keyword>
<keyword id="KW-0234">DNA repair</keyword>
<keyword id="KW-0238">DNA-binding</keyword>
<keyword id="KW-0326">Glycosidase</keyword>
<keyword id="KW-0378">Hydrolase</keyword>
<keyword id="KW-0456">Lyase</keyword>
<keyword id="KW-0479">Metal-binding</keyword>
<keyword id="KW-0511">Multifunctional enzyme</keyword>
<keyword id="KW-0862">Zinc</keyword>
<keyword id="KW-0863">Zinc-finger</keyword>
<reference key="1">
    <citation type="journal article" date="2008" name="BMC Genomics">
        <title>The missing link: Bordetella petrii is endowed with both the metabolic versatility of environmental bacteria and virulence traits of pathogenic Bordetellae.</title>
        <authorList>
            <person name="Gross R."/>
            <person name="Guzman C.A."/>
            <person name="Sebaihia M."/>
            <person name="Martin dos Santos V.A.P."/>
            <person name="Pieper D.H."/>
            <person name="Koebnik R."/>
            <person name="Lechner M."/>
            <person name="Bartels D."/>
            <person name="Buhrmester J."/>
            <person name="Choudhuri J.V."/>
            <person name="Ebensen T."/>
            <person name="Gaigalat L."/>
            <person name="Herrmann S."/>
            <person name="Khachane A.N."/>
            <person name="Larisch C."/>
            <person name="Link S."/>
            <person name="Linke B."/>
            <person name="Meyer F."/>
            <person name="Mormann S."/>
            <person name="Nakunst D."/>
            <person name="Rueckert C."/>
            <person name="Schneiker-Bekel S."/>
            <person name="Schulze K."/>
            <person name="Voerholter F.-J."/>
            <person name="Yevsa T."/>
            <person name="Engle J.T."/>
            <person name="Goldman W.E."/>
            <person name="Puehler A."/>
            <person name="Goebel U.B."/>
            <person name="Goesmann A."/>
            <person name="Bloecker H."/>
            <person name="Kaiser O."/>
            <person name="Martinez-Arias R."/>
        </authorList>
    </citation>
    <scope>NUCLEOTIDE SEQUENCE [LARGE SCALE GENOMIC DNA]</scope>
    <source>
        <strain>ATCC BAA-461 / DSM 12804 / CCUG 43448</strain>
    </source>
</reference>
<comment type="function">
    <text evidence="2">Involved in base excision repair of DNA damaged by oxidation or by mutagenic agents. Acts as a DNA glycosylase that recognizes and removes damaged bases. Has a preference for oxidized purines, such as 7,8-dihydro-8-oxoguanine (8-oxoG). Has AP (apurinic/apyrimidinic) lyase activity and introduces nicks in the DNA strand. Cleaves the DNA backbone by beta-delta elimination to generate a single-strand break at the site of the removed base with both 3'- and 5'-phosphates.</text>
</comment>
<comment type="catalytic activity">
    <reaction evidence="2">
        <text>Hydrolysis of DNA containing ring-opened 7-methylguanine residues, releasing 2,6-diamino-4-hydroxy-5-(N-methyl)formamidopyrimidine.</text>
        <dbReference type="EC" id="3.2.2.23"/>
    </reaction>
</comment>
<comment type="catalytic activity">
    <reaction evidence="2">
        <text>2'-deoxyribonucleotide-(2'-deoxyribose 5'-phosphate)-2'-deoxyribonucleotide-DNA = a 3'-end 2'-deoxyribonucleotide-(2,3-dehydro-2,3-deoxyribose 5'-phosphate)-DNA + a 5'-end 5'-phospho-2'-deoxyribonucleoside-DNA + H(+)</text>
        <dbReference type="Rhea" id="RHEA:66592"/>
        <dbReference type="Rhea" id="RHEA-COMP:13180"/>
        <dbReference type="Rhea" id="RHEA-COMP:16897"/>
        <dbReference type="Rhea" id="RHEA-COMP:17067"/>
        <dbReference type="ChEBI" id="CHEBI:15378"/>
        <dbReference type="ChEBI" id="CHEBI:136412"/>
        <dbReference type="ChEBI" id="CHEBI:157695"/>
        <dbReference type="ChEBI" id="CHEBI:167181"/>
        <dbReference type="EC" id="4.2.99.18"/>
    </reaction>
</comment>
<comment type="cofactor">
    <cofactor evidence="2">
        <name>Zn(2+)</name>
        <dbReference type="ChEBI" id="CHEBI:29105"/>
    </cofactor>
    <text evidence="2">Binds 1 zinc ion per subunit.</text>
</comment>
<comment type="subunit">
    <text evidence="2">Monomer.</text>
</comment>
<comment type="similarity">
    <text evidence="2">Belongs to the FPG family.</text>
</comment>
<protein>
    <recommendedName>
        <fullName evidence="2">Formamidopyrimidine-DNA glycosylase</fullName>
        <shortName evidence="2">Fapy-DNA glycosylase</shortName>
        <ecNumber evidence="2">3.2.2.23</ecNumber>
    </recommendedName>
    <alternativeName>
        <fullName evidence="2">DNA-(apurinic or apyrimidinic site) lyase MutM</fullName>
        <shortName evidence="2">AP lyase MutM</shortName>
        <ecNumber evidence="2">4.2.99.18</ecNumber>
    </alternativeName>
</protein>
<feature type="initiator methionine" description="Removed" evidence="1">
    <location>
        <position position="1"/>
    </location>
</feature>
<feature type="chain" id="PRO_1000094031" description="Formamidopyrimidine-DNA glycosylase">
    <location>
        <begin position="2"/>
        <end position="275"/>
    </location>
</feature>
<feature type="zinc finger region" description="FPG-type" evidence="2">
    <location>
        <begin position="240"/>
        <end position="274"/>
    </location>
</feature>
<feature type="active site" description="Schiff-base intermediate with DNA" evidence="2">
    <location>
        <position position="2"/>
    </location>
</feature>
<feature type="active site" description="Proton donor" evidence="2">
    <location>
        <position position="3"/>
    </location>
</feature>
<feature type="active site" description="Proton donor; for beta-elimination activity" evidence="2">
    <location>
        <position position="58"/>
    </location>
</feature>
<feature type="active site" description="Proton donor; for delta-elimination activity" evidence="2">
    <location>
        <position position="264"/>
    </location>
</feature>
<feature type="binding site" evidence="2">
    <location>
        <position position="91"/>
    </location>
    <ligand>
        <name>DNA</name>
        <dbReference type="ChEBI" id="CHEBI:16991"/>
    </ligand>
</feature>
<feature type="binding site" evidence="2">
    <location>
        <position position="109"/>
    </location>
    <ligand>
        <name>DNA</name>
        <dbReference type="ChEBI" id="CHEBI:16991"/>
    </ligand>
</feature>
<feature type="binding site" evidence="2">
    <location>
        <position position="154"/>
    </location>
    <ligand>
        <name>DNA</name>
        <dbReference type="ChEBI" id="CHEBI:16991"/>
    </ligand>
</feature>